<evidence type="ECO:0000255" key="1">
    <source>
        <dbReference type="HAMAP-Rule" id="MF_00911"/>
    </source>
</evidence>
<evidence type="ECO:0000255" key="2">
    <source>
        <dbReference type="PROSITE-ProRule" id="PRU01115"/>
    </source>
</evidence>
<evidence type="ECO:0000305" key="3"/>
<organism>
    <name type="scientific">Corynebacterium glutamicum (strain ATCC 13032 / DSM 20300 / JCM 1318 / BCRC 11384 / CCUG 27702 / LMG 3730 / NBRC 12168 / NCIMB 10025 / NRRL B-2784 / 534)</name>
    <dbReference type="NCBI Taxonomy" id="196627"/>
    <lineage>
        <taxon>Bacteria</taxon>
        <taxon>Bacillati</taxon>
        <taxon>Actinomycetota</taxon>
        <taxon>Actinomycetes</taxon>
        <taxon>Mycobacteriales</taxon>
        <taxon>Corynebacteriaceae</taxon>
        <taxon>Corynebacterium</taxon>
    </lineage>
</organism>
<dbReference type="EMBL" id="AB003132">
    <property type="protein sequence ID" value="BAA21686.1"/>
    <property type="molecule type" value="Genomic_DNA"/>
</dbReference>
<dbReference type="EMBL" id="AB015023">
    <property type="protein sequence ID" value="BAA34294.1"/>
    <property type="molecule type" value="Genomic_DNA"/>
</dbReference>
<dbReference type="EMBL" id="Y08964">
    <property type="protein sequence ID" value="CAA70161.1"/>
    <property type="molecule type" value="Genomic_DNA"/>
</dbReference>
<dbReference type="EMBL" id="BA000036">
    <property type="protein sequence ID" value="BAB99549.1"/>
    <property type="molecule type" value="Genomic_DNA"/>
</dbReference>
<dbReference type="EMBL" id="BX927154">
    <property type="protein sequence ID" value="CAF20496.1"/>
    <property type="molecule type" value="Genomic_DNA"/>
</dbReference>
<dbReference type="RefSeq" id="NP_601358.1">
    <property type="nucleotide sequence ID" value="NC_003450.3"/>
</dbReference>
<dbReference type="RefSeq" id="WP_003860375.1">
    <property type="nucleotide sequence ID" value="NC_006958.1"/>
</dbReference>
<dbReference type="SMR" id="P94336"/>
<dbReference type="STRING" id="196627.cg2367"/>
<dbReference type="GeneID" id="1020108"/>
<dbReference type="KEGG" id="cgb:cg2367"/>
<dbReference type="KEGG" id="cgl:Cgl2156"/>
<dbReference type="PATRIC" id="fig|196627.13.peg.2094"/>
<dbReference type="eggNOG" id="COG1589">
    <property type="taxonomic scope" value="Bacteria"/>
</dbReference>
<dbReference type="HOGENOM" id="CLU_047677_1_1_11"/>
<dbReference type="OrthoDB" id="9790760at2"/>
<dbReference type="BioCyc" id="CORYNE:G18NG-11748-MONOMER"/>
<dbReference type="Proteomes" id="UP000000582">
    <property type="component" value="Chromosome"/>
</dbReference>
<dbReference type="Proteomes" id="UP000001009">
    <property type="component" value="Chromosome"/>
</dbReference>
<dbReference type="GO" id="GO:0032153">
    <property type="term" value="C:cell division site"/>
    <property type="evidence" value="ECO:0007669"/>
    <property type="project" value="UniProtKB-UniRule"/>
</dbReference>
<dbReference type="GO" id="GO:0005886">
    <property type="term" value="C:plasma membrane"/>
    <property type="evidence" value="ECO:0007669"/>
    <property type="project" value="UniProtKB-SubCell"/>
</dbReference>
<dbReference type="GO" id="GO:0090529">
    <property type="term" value="P:cell septum assembly"/>
    <property type="evidence" value="ECO:0007669"/>
    <property type="project" value="InterPro"/>
</dbReference>
<dbReference type="GO" id="GO:0043093">
    <property type="term" value="P:FtsZ-dependent cytokinesis"/>
    <property type="evidence" value="ECO:0007669"/>
    <property type="project" value="UniProtKB-UniRule"/>
</dbReference>
<dbReference type="Gene3D" id="3.10.20.310">
    <property type="entry name" value="membrane protein fhac"/>
    <property type="match status" value="1"/>
</dbReference>
<dbReference type="HAMAP" id="MF_00911">
    <property type="entry name" value="FtsQ_subfam"/>
    <property type="match status" value="1"/>
</dbReference>
<dbReference type="InterPro" id="IPR026579">
    <property type="entry name" value="FtsQ"/>
</dbReference>
<dbReference type="InterPro" id="IPR050487">
    <property type="entry name" value="FtsQ_DivIB"/>
</dbReference>
<dbReference type="InterPro" id="IPR034746">
    <property type="entry name" value="POTRA"/>
</dbReference>
<dbReference type="InterPro" id="IPR013685">
    <property type="entry name" value="POTRA_FtsQ_type"/>
</dbReference>
<dbReference type="PANTHER" id="PTHR37820">
    <property type="entry name" value="CELL DIVISION PROTEIN DIVIB"/>
    <property type="match status" value="1"/>
</dbReference>
<dbReference type="PANTHER" id="PTHR37820:SF1">
    <property type="entry name" value="CELL DIVISION PROTEIN FTSQ"/>
    <property type="match status" value="1"/>
</dbReference>
<dbReference type="Pfam" id="PF08478">
    <property type="entry name" value="POTRA_1"/>
    <property type="match status" value="1"/>
</dbReference>
<dbReference type="PROSITE" id="PS51779">
    <property type="entry name" value="POTRA"/>
    <property type="match status" value="1"/>
</dbReference>
<protein>
    <recommendedName>
        <fullName evidence="1">Cell division protein FtsQ</fullName>
    </recommendedName>
</protein>
<proteinExistence type="inferred from homology"/>
<comment type="function">
    <text evidence="1">Essential cell division protein.</text>
</comment>
<comment type="subcellular location">
    <subcellularLocation>
        <location evidence="1">Cell membrane</location>
        <topology evidence="1">Single-pass type II membrane protein</topology>
    </subcellularLocation>
    <text evidence="1">Localizes to the division septum.</text>
</comment>
<comment type="similarity">
    <text evidence="1">Belongs to the FtsQ/DivIB family. FtsQ subfamily.</text>
</comment>
<name>FTSQ_CORGL</name>
<accession>P94336</accession>
<accession>O24745</accession>
<reference key="1">
    <citation type="journal article" date="1997" name="Biochem. Biophys. Res. Commun.">
        <title>Cloning, sequencing, and characterization of the ftsZ gene from coryneform bacteria.</title>
        <authorList>
            <person name="Kobayashi M."/>
            <person name="Asai Y."/>
            <person name="Hatakeyama K."/>
            <person name="Kijima N."/>
            <person name="Wachi M."/>
            <person name="Nagai K."/>
            <person name="Yukawa H."/>
        </authorList>
    </citation>
    <scope>NUCLEOTIDE SEQUENCE [GENOMIC DNA]</scope>
</reference>
<reference key="2">
    <citation type="journal article" date="1999" name="Appl. Microbiol. Biotechnol.">
        <title>A murC gene from coryneform bacteria.</title>
        <authorList>
            <person name="Wachi M."/>
            <person name="Wijayarathna C.D."/>
            <person name="Teraoka H."/>
            <person name="Nagai K."/>
        </authorList>
    </citation>
    <scope>NUCLEOTIDE SEQUENCE [GENOMIC DNA]</scope>
    <source>
        <strain>MJ233</strain>
    </source>
</reference>
<reference key="3">
    <citation type="journal article" date="1998" name="Mol. Gen. Genet.">
        <title>Identification, characterization, and chromosomal organization of the ftsZ gene from Brevibacterium lactofermentum.</title>
        <authorList>
            <person name="Honrubia M.P."/>
            <person name="Fernandez F.J."/>
            <person name="Gil J.A."/>
        </authorList>
    </citation>
    <scope>NUCLEOTIDE SEQUENCE [GENOMIC DNA]</scope>
    <source>
        <strain>ATCC 13869 / DSMZ 1412 / NCIMB 9567</strain>
    </source>
</reference>
<reference key="4">
    <citation type="journal article" date="2003" name="Appl. Microbiol. Biotechnol.">
        <title>The Corynebacterium glutamicum genome: features and impacts on biotechnological processes.</title>
        <authorList>
            <person name="Ikeda M."/>
            <person name="Nakagawa S."/>
        </authorList>
    </citation>
    <scope>NUCLEOTIDE SEQUENCE [LARGE SCALE GENOMIC DNA]</scope>
    <source>
        <strain>ATCC 13032 / DSM 20300 / JCM 1318 / BCRC 11384 / CCUG 27702 / LMG 3730 / NBRC 12168 / NCIMB 10025 / NRRL B-2784 / 534</strain>
    </source>
</reference>
<reference key="5">
    <citation type="journal article" date="2003" name="J. Biotechnol.">
        <title>The complete Corynebacterium glutamicum ATCC 13032 genome sequence and its impact on the production of L-aspartate-derived amino acids and vitamins.</title>
        <authorList>
            <person name="Kalinowski J."/>
            <person name="Bathe B."/>
            <person name="Bartels D."/>
            <person name="Bischoff N."/>
            <person name="Bott M."/>
            <person name="Burkovski A."/>
            <person name="Dusch N."/>
            <person name="Eggeling L."/>
            <person name="Eikmanns B.J."/>
            <person name="Gaigalat L."/>
            <person name="Goesmann A."/>
            <person name="Hartmann M."/>
            <person name="Huthmacher K."/>
            <person name="Kraemer R."/>
            <person name="Linke B."/>
            <person name="McHardy A.C."/>
            <person name="Meyer F."/>
            <person name="Moeckel B."/>
            <person name="Pfefferle W."/>
            <person name="Puehler A."/>
            <person name="Rey D.A."/>
            <person name="Rueckert C."/>
            <person name="Rupp O."/>
            <person name="Sahm H."/>
            <person name="Wendisch V.F."/>
            <person name="Wiegraebe I."/>
            <person name="Tauch A."/>
        </authorList>
    </citation>
    <scope>NUCLEOTIDE SEQUENCE [LARGE SCALE GENOMIC DNA]</scope>
    <source>
        <strain>ATCC 13032 / DSM 20300 / JCM 1318 / BCRC 11384 / CCUG 27702 / LMG 3730 / NBRC 12168 / NCIMB 10025 / NRRL B-2784 / 534</strain>
    </source>
</reference>
<sequence length="222" mass="23874">MNKKVIAIVVGVVVVLVAILGVVAWFVPILKVGNIEVTGATRTDPDQVLEVSGIVEGENLFRVDATAAGQNIVELPWVKSVTVNRALPSTITVELTEREPAVFIKRADGDHVIDTEGKEIIIGTPPVGTVEVSGADEGNSEVLPAVIAVINAIKAQDAQMTESIQVVEAPDQFDILLKMNDGREIYWGSSENNHDKAVAMSTVLKREGQRWNISSPSMVTVR</sequence>
<gene>
    <name evidence="1" type="primary">ftsQ</name>
    <name type="synonym">divB</name>
    <name type="ordered locus">Cgl2156</name>
    <name type="ordered locus">cg2367</name>
</gene>
<keyword id="KW-0131">Cell cycle</keyword>
<keyword id="KW-0132">Cell division</keyword>
<keyword id="KW-1003">Cell membrane</keyword>
<keyword id="KW-0472">Membrane</keyword>
<keyword id="KW-1185">Reference proteome</keyword>
<keyword id="KW-0812">Transmembrane</keyword>
<keyword id="KW-1133">Transmembrane helix</keyword>
<feature type="chain" id="PRO_0000160579" description="Cell division protein FtsQ">
    <location>
        <begin position="1"/>
        <end position="222"/>
    </location>
</feature>
<feature type="topological domain" description="Cytoplasmic" evidence="1">
    <location>
        <begin position="1"/>
        <end position="5"/>
    </location>
</feature>
<feature type="transmembrane region" description="Helical" evidence="1">
    <location>
        <begin position="6"/>
        <end position="26"/>
    </location>
</feature>
<feature type="topological domain" description="Extracellular" evidence="1">
    <location>
        <begin position="27"/>
        <end position="222"/>
    </location>
</feature>
<feature type="domain" description="POTRA" evidence="2">
    <location>
        <begin position="30"/>
        <end position="98"/>
    </location>
</feature>
<feature type="sequence conflict" description="In Ref. 3; CAA70161." evidence="3" ref="3">
    <original>A</original>
    <variation>R</variation>
    <location>
        <position position="155"/>
    </location>
</feature>
<feature type="sequence conflict" description="In Ref. 1 and 2." evidence="3" ref="1 2">
    <original>E</original>
    <variation>D</variation>
    <location>
        <position position="207"/>
    </location>
</feature>